<comment type="function">
    <text evidence="1">Part of the ABC transporter complex AraFGH involved in arabinose import. Responsible for energy coupling to the transport system.</text>
</comment>
<comment type="catalytic activity">
    <reaction evidence="1">
        <text>L-arabinose(out) + ATP + H2O = L-arabinose(in) + ADP + phosphate + H(+)</text>
        <dbReference type="Rhea" id="RHEA:30007"/>
        <dbReference type="ChEBI" id="CHEBI:15377"/>
        <dbReference type="ChEBI" id="CHEBI:15378"/>
        <dbReference type="ChEBI" id="CHEBI:17535"/>
        <dbReference type="ChEBI" id="CHEBI:30616"/>
        <dbReference type="ChEBI" id="CHEBI:43474"/>
        <dbReference type="ChEBI" id="CHEBI:456216"/>
        <dbReference type="EC" id="7.5.2.12"/>
    </reaction>
</comment>
<comment type="subunit">
    <text evidence="1">The complex is composed of two ATP-binding proteins (AraG), two transmembrane proteins (AraH) and a solute-binding protein (AraF).</text>
</comment>
<comment type="subcellular location">
    <subcellularLocation>
        <location evidence="1">Cell inner membrane</location>
        <topology evidence="1">Peripheral membrane protein</topology>
    </subcellularLocation>
</comment>
<comment type="similarity">
    <text evidence="1">Belongs to the ABC transporter superfamily. Arabinose importer (TC 3.A.1.2.2) family.</text>
</comment>
<reference key="1">
    <citation type="journal article" date="2004" name="Proc. Natl. Acad. Sci. U.S.A.">
        <title>Genome sequence of the enterobacterial phytopathogen Erwinia carotovora subsp. atroseptica and characterization of virulence factors.</title>
        <authorList>
            <person name="Bell K.S."/>
            <person name="Sebaihia M."/>
            <person name="Pritchard L."/>
            <person name="Holden M.T.G."/>
            <person name="Hyman L.J."/>
            <person name="Holeva M.C."/>
            <person name="Thomson N.R."/>
            <person name="Bentley S.D."/>
            <person name="Churcher L.J.C."/>
            <person name="Mungall K."/>
            <person name="Atkin R."/>
            <person name="Bason N."/>
            <person name="Brooks K."/>
            <person name="Chillingworth T."/>
            <person name="Clark K."/>
            <person name="Doggett J."/>
            <person name="Fraser A."/>
            <person name="Hance Z."/>
            <person name="Hauser H."/>
            <person name="Jagels K."/>
            <person name="Moule S."/>
            <person name="Norbertczak H."/>
            <person name="Ormond D."/>
            <person name="Price C."/>
            <person name="Quail M.A."/>
            <person name="Sanders M."/>
            <person name="Walker D."/>
            <person name="Whitehead S."/>
            <person name="Salmond G.P.C."/>
            <person name="Birch P.R.J."/>
            <person name="Parkhill J."/>
            <person name="Toth I.K."/>
        </authorList>
    </citation>
    <scope>NUCLEOTIDE SEQUENCE [LARGE SCALE GENOMIC DNA]</scope>
    <source>
        <strain>SCRI 1043 / ATCC BAA-672</strain>
    </source>
</reference>
<evidence type="ECO:0000255" key="1">
    <source>
        <dbReference type="HAMAP-Rule" id="MF_01721"/>
    </source>
</evidence>
<proteinExistence type="inferred from homology"/>
<gene>
    <name evidence="1" type="primary">araG</name>
    <name type="ordered locus">ECA2272</name>
</gene>
<keyword id="KW-0067">ATP-binding</keyword>
<keyword id="KW-0997">Cell inner membrane</keyword>
<keyword id="KW-1003">Cell membrane</keyword>
<keyword id="KW-0472">Membrane</keyword>
<keyword id="KW-0547">Nucleotide-binding</keyword>
<keyword id="KW-1185">Reference proteome</keyword>
<keyword id="KW-0677">Repeat</keyword>
<keyword id="KW-0762">Sugar transport</keyword>
<keyword id="KW-1278">Translocase</keyword>
<keyword id="KW-0813">Transport</keyword>
<dbReference type="EC" id="7.5.2.12" evidence="1"/>
<dbReference type="EMBL" id="BX950851">
    <property type="protein sequence ID" value="CAG75175.1"/>
    <property type="molecule type" value="Genomic_DNA"/>
</dbReference>
<dbReference type="RefSeq" id="WP_011093830.1">
    <property type="nucleotide sequence ID" value="NC_004547.2"/>
</dbReference>
<dbReference type="SMR" id="Q6D4W8"/>
<dbReference type="STRING" id="218491.ECA2272"/>
<dbReference type="GeneID" id="57209007"/>
<dbReference type="KEGG" id="eca:ECA2272"/>
<dbReference type="PATRIC" id="fig|218491.5.peg.2302"/>
<dbReference type="eggNOG" id="COG1129">
    <property type="taxonomic scope" value="Bacteria"/>
</dbReference>
<dbReference type="HOGENOM" id="CLU_000604_92_3_6"/>
<dbReference type="OrthoDB" id="9776369at2"/>
<dbReference type="Proteomes" id="UP000007966">
    <property type="component" value="Chromosome"/>
</dbReference>
<dbReference type="GO" id="GO:0005886">
    <property type="term" value="C:plasma membrane"/>
    <property type="evidence" value="ECO:0007669"/>
    <property type="project" value="UniProtKB-SubCell"/>
</dbReference>
<dbReference type="GO" id="GO:0015612">
    <property type="term" value="F:ABC-type L-arabinose transporter activity"/>
    <property type="evidence" value="ECO:0007669"/>
    <property type="project" value="UniProtKB-EC"/>
</dbReference>
<dbReference type="GO" id="GO:0005524">
    <property type="term" value="F:ATP binding"/>
    <property type="evidence" value="ECO:0007669"/>
    <property type="project" value="UniProtKB-KW"/>
</dbReference>
<dbReference type="GO" id="GO:0016887">
    <property type="term" value="F:ATP hydrolysis activity"/>
    <property type="evidence" value="ECO:0007669"/>
    <property type="project" value="InterPro"/>
</dbReference>
<dbReference type="CDD" id="cd03216">
    <property type="entry name" value="ABC_Carb_Monos_I"/>
    <property type="match status" value="1"/>
</dbReference>
<dbReference type="CDD" id="cd03215">
    <property type="entry name" value="ABC_Carb_Monos_II"/>
    <property type="match status" value="1"/>
</dbReference>
<dbReference type="FunFam" id="3.40.50.300:FF:000126">
    <property type="entry name" value="Galactose/methyl galactoside import ATP-binding protein MglA"/>
    <property type="match status" value="1"/>
</dbReference>
<dbReference type="FunFam" id="3.40.50.300:FF:000127">
    <property type="entry name" value="Ribose import ATP-binding protein RbsA"/>
    <property type="match status" value="1"/>
</dbReference>
<dbReference type="Gene3D" id="3.40.50.300">
    <property type="entry name" value="P-loop containing nucleotide triphosphate hydrolases"/>
    <property type="match status" value="2"/>
</dbReference>
<dbReference type="InterPro" id="IPR003593">
    <property type="entry name" value="AAA+_ATPase"/>
</dbReference>
<dbReference type="InterPro" id="IPR050107">
    <property type="entry name" value="ABC_carbohydrate_import_ATPase"/>
</dbReference>
<dbReference type="InterPro" id="IPR003439">
    <property type="entry name" value="ABC_transporter-like_ATP-bd"/>
</dbReference>
<dbReference type="InterPro" id="IPR017871">
    <property type="entry name" value="ABC_transporter-like_CS"/>
</dbReference>
<dbReference type="InterPro" id="IPR027417">
    <property type="entry name" value="P-loop_NTPase"/>
</dbReference>
<dbReference type="NCBIfam" id="NF008442">
    <property type="entry name" value="PRK11288.1"/>
    <property type="match status" value="1"/>
</dbReference>
<dbReference type="PANTHER" id="PTHR43790:SF6">
    <property type="entry name" value="ARABINOSE IMPORT ATP-BINDING PROTEIN ARAG"/>
    <property type="match status" value="1"/>
</dbReference>
<dbReference type="PANTHER" id="PTHR43790">
    <property type="entry name" value="CARBOHYDRATE TRANSPORT ATP-BINDING PROTEIN MG119-RELATED"/>
    <property type="match status" value="1"/>
</dbReference>
<dbReference type="Pfam" id="PF00005">
    <property type="entry name" value="ABC_tran"/>
    <property type="match status" value="2"/>
</dbReference>
<dbReference type="SMART" id="SM00382">
    <property type="entry name" value="AAA"/>
    <property type="match status" value="2"/>
</dbReference>
<dbReference type="SUPFAM" id="SSF52540">
    <property type="entry name" value="P-loop containing nucleoside triphosphate hydrolases"/>
    <property type="match status" value="2"/>
</dbReference>
<dbReference type="PROSITE" id="PS00211">
    <property type="entry name" value="ABC_TRANSPORTER_1"/>
    <property type="match status" value="1"/>
</dbReference>
<dbReference type="PROSITE" id="PS50893">
    <property type="entry name" value="ABC_TRANSPORTER_2"/>
    <property type="match status" value="2"/>
</dbReference>
<dbReference type="PROSITE" id="PS51268">
    <property type="entry name" value="ARAG"/>
    <property type="match status" value="1"/>
</dbReference>
<sequence length="507" mass="55508">MTAQSPYLSFHGIGKEFPGVKALSDISFSCHAGQIHALMGENGAGKSTLLKILSGNYSPSAGEIHIQGKPVQFSNTMDALNAGVAIIYQELHLVPEMTVAENIYLGQLPHKYGMVNYSLLRYEAKLQLQHLGLDIDPDTPLKYLSIGQWQMVEIAKALARNAKIIAFDEPTSSLSAREIEQLFRVITELRSEGRIILYVSHRMEEIFALSDAITVFKDGRYVCTFDDMQQVNHESLVQAMVGRNLGNIYGYAPRPHGEDRLTLKDVKAPGVKSTISLNVKQGEIVGLFGLVGAGRSELMKGLFGATKITSGQVLLDGKPLVVNSPIDAIRQGVMLCPEDRKADGIIPVHSVRDNINISARRKSLKAGFIINNQWEADNAAQRIDALNIKTPSDEQLIMNLSGGNQQKVILGRWLSEEMKVILLDEPTRGIDVGAKHEIYHVIYELANQGIAVLFASSDLPEVLGLADRIIVMREGAVSGELLHADATEQKVLSLAMLRIPDIESAVA</sequence>
<protein>
    <recommendedName>
        <fullName evidence="1">Arabinose import ATP-binding protein AraG</fullName>
        <ecNumber evidence="1">7.5.2.12</ecNumber>
    </recommendedName>
</protein>
<name>ARAG_PECAS</name>
<feature type="chain" id="PRO_0000270466" description="Arabinose import ATP-binding protein AraG">
    <location>
        <begin position="1"/>
        <end position="507"/>
    </location>
</feature>
<feature type="domain" description="ABC transporter 1" evidence="1">
    <location>
        <begin position="8"/>
        <end position="243"/>
    </location>
</feature>
<feature type="domain" description="ABC transporter 2" evidence="1">
    <location>
        <begin position="255"/>
        <end position="499"/>
    </location>
</feature>
<feature type="binding site" evidence="1">
    <location>
        <begin position="40"/>
        <end position="47"/>
    </location>
    <ligand>
        <name>ATP</name>
        <dbReference type="ChEBI" id="CHEBI:30616"/>
    </ligand>
</feature>
<accession>Q6D4W8</accession>
<organism>
    <name type="scientific">Pectobacterium atrosepticum (strain SCRI 1043 / ATCC BAA-672)</name>
    <name type="common">Erwinia carotovora subsp. atroseptica</name>
    <dbReference type="NCBI Taxonomy" id="218491"/>
    <lineage>
        <taxon>Bacteria</taxon>
        <taxon>Pseudomonadati</taxon>
        <taxon>Pseudomonadota</taxon>
        <taxon>Gammaproteobacteria</taxon>
        <taxon>Enterobacterales</taxon>
        <taxon>Pectobacteriaceae</taxon>
        <taxon>Pectobacterium</taxon>
    </lineage>
</organism>